<accession>Q04546</accession>
<accession>Q77LR8</accession>
<evidence type="ECO:0000255" key="1"/>
<evidence type="ECO:0000305" key="2"/>
<sequence>MADKSDSEAVALLMEAIVTTPDTNSEPQYQSQHRDLQECYYSDSDNEKATEFLRRIGKHQHKKKNSVKKRVTFLVYF</sequence>
<gene>
    <name type="ORF">ORF65</name>
</gene>
<comment type="similarity">
    <text evidence="2">Belongs to the alphaherpesvirinae envelope protein US9 family.</text>
</comment>
<comment type="caution">
    <text evidence="2">Lacks the C-terminal hydrophobic stretch usually present in alphaherpesvirinae Us9 proteins.</text>
</comment>
<keyword id="KW-1185">Reference proteome</keyword>
<protein>
    <recommendedName>
        <fullName>Envelope protein US9 homolog</fullName>
    </recommendedName>
    <alternativeName>
        <fullName>Envelope protein 65</fullName>
    </alternativeName>
    <alternativeName>
        <fullName>ORF65 protein</fullName>
    </alternativeName>
</protein>
<organismHost>
    <name type="scientific">Chlorocebus aethiops</name>
    <name type="common">Green monkey</name>
    <name type="synonym">Cercopithecus aethiops</name>
    <dbReference type="NCBI Taxonomy" id="9534"/>
</organismHost>
<reference key="1">
    <citation type="journal article" date="1993" name="Virology">
        <title>DNA sequence and genetic organization of the unique short (US) region of the simian varicella virus genome.</title>
        <authorList>
            <person name="Fletcher T.M. III"/>
            <person name="Gray W.L."/>
        </authorList>
    </citation>
    <scope>NUCLEOTIDE SEQUENCE [GENOMIC DNA]</scope>
</reference>
<reference key="2">
    <citation type="journal article" date="2001" name="Virology">
        <title>The DNA sequence of the simian varicella virus genome.</title>
        <authorList>
            <person name="Gray W.L."/>
            <person name="Starnes H.B."/>
            <person name="White M.W."/>
            <person name="Mahalingam R."/>
        </authorList>
    </citation>
    <scope>NUCLEOTIDE SEQUENCE [LARGE SCALE GENOMIC DNA]</scope>
</reference>
<reference key="3">
    <citation type="submission" date="2007-01" db="EMBL/GenBank/DDBJ databases">
        <authorList>
            <person name="Gray W.L."/>
            <person name="Starnes H.B."/>
            <person name="White M.W."/>
            <person name="Ashburn C.V."/>
            <person name="Mahalingam R."/>
        </authorList>
    </citation>
    <scope>SEQUENCE REVISION</scope>
</reference>
<proteinExistence type="inferred from homology"/>
<dbReference type="EMBL" id="L07067">
    <property type="protein sequence ID" value="AAA47886.1"/>
    <property type="molecule type" value="Genomic_DNA"/>
</dbReference>
<dbReference type="EMBL" id="AF275348">
    <property type="protein sequence ID" value="AAG27240.1"/>
    <property type="molecule type" value="Genomic_DNA"/>
</dbReference>
<dbReference type="PIR" id="A46113">
    <property type="entry name" value="A46113"/>
</dbReference>
<dbReference type="RefSeq" id="NP_077479.1">
    <property type="nucleotide sequence ID" value="NC_002686.2"/>
</dbReference>
<dbReference type="GeneID" id="920544"/>
<dbReference type="KEGG" id="vg:920544"/>
<dbReference type="Proteomes" id="UP000159358">
    <property type="component" value="Segment"/>
</dbReference>
<dbReference type="GO" id="GO:0043657">
    <property type="term" value="C:host cell"/>
    <property type="evidence" value="ECO:0007669"/>
    <property type="project" value="GOC"/>
</dbReference>
<dbReference type="GO" id="GO:0075733">
    <property type="term" value="P:intracellular transport of virus"/>
    <property type="evidence" value="ECO:0007669"/>
    <property type="project" value="InterPro"/>
</dbReference>
<dbReference type="InterPro" id="IPR009278">
    <property type="entry name" value="Herpes_US9"/>
</dbReference>
<dbReference type="Pfam" id="PF06072">
    <property type="entry name" value="Herpes_US9"/>
    <property type="match status" value="1"/>
</dbReference>
<name>US9_CHV9D</name>
<organism>
    <name type="scientific">Cercopithecine herpesvirus 9 (strain DHV)</name>
    <name type="common">CeHV-9</name>
    <name type="synonym">Simian varicella virus</name>
    <dbReference type="NCBI Taxonomy" id="36348"/>
    <lineage>
        <taxon>Viruses</taxon>
        <taxon>Duplodnaviria</taxon>
        <taxon>Heunggongvirae</taxon>
        <taxon>Peploviricota</taxon>
        <taxon>Herviviricetes</taxon>
        <taxon>Herpesvirales</taxon>
        <taxon>Orthoherpesviridae</taxon>
        <taxon>Alphaherpesvirinae</taxon>
        <taxon>Varicellovirus</taxon>
        <taxon>Varicellovirus cercopithecinealpha9</taxon>
    </lineage>
</organism>
<feature type="chain" id="PRO_0000116140" description="Envelope protein US9 homolog">
    <location>
        <begin position="1"/>
        <end position="77"/>
    </location>
</feature>
<feature type="short sequence motif" description="Di-leucine internalization motif" evidence="1">
    <location>
        <begin position="12"/>
        <end position="13"/>
    </location>
</feature>